<proteinExistence type="predicted"/>
<organism>
    <name type="scientific">Frog virus 3 (isolate Goorha)</name>
    <name type="common">FV-3</name>
    <dbReference type="NCBI Taxonomy" id="654924"/>
    <lineage>
        <taxon>Viruses</taxon>
        <taxon>Varidnaviria</taxon>
        <taxon>Bamfordvirae</taxon>
        <taxon>Nucleocytoviricota</taxon>
        <taxon>Megaviricetes</taxon>
        <taxon>Pimascovirales</taxon>
        <taxon>Iridoviridae</taxon>
        <taxon>Alphairidovirinae</taxon>
        <taxon>Ranavirus</taxon>
        <taxon>Frog virus 3</taxon>
    </lineage>
</organism>
<reference key="1">
    <citation type="journal article" date="2004" name="Virology">
        <title>Comparative genomic analyses of frog virus 3, type species of the genus Ranavirus (family Iridoviridae).</title>
        <authorList>
            <person name="Tan W.G."/>
            <person name="Barkman T.J."/>
            <person name="Gregory Chinchar V."/>
            <person name="Essani K."/>
        </authorList>
    </citation>
    <scope>NUCLEOTIDE SEQUENCE [LARGE SCALE GENOMIC DNA]</scope>
</reference>
<gene>
    <name type="ORF">FV3-012L</name>
</gene>
<keyword id="KW-1185">Reference proteome</keyword>
<protein>
    <recommendedName>
        <fullName>Uncharacterized protein 012L</fullName>
    </recommendedName>
</protein>
<sequence>MCAKLVEMAFGPVNADSPPLTAEEKESAVEKLVGSKPFPALKKKYHDKVPAQDPKYCLFSFVEVLPSCDIKAAGAEEMCSCCIKRRRGQVFGVACVRGTAHTLAKAKQKADKLVGDYDSVHVVQTCHVGRPFPLVSSGMAQETVAPSAMEAAEAAMDAKSAEKRKERMRQKLEMRKREQEIKARNRKLLEDPSCDPDAEEETDLERYATLRVKTTCLLENAKNASAQIKEYLASMRKSAEAVVAMEAADPTLVENYPGLIRDSRAKMGVSKQDTEAFLKMSSFDCLTAASELETMGF</sequence>
<organismHost>
    <name type="scientific">Dryophytes versicolor</name>
    <name type="common">chameleon treefrog</name>
    <dbReference type="NCBI Taxonomy" id="30343"/>
</organismHost>
<organismHost>
    <name type="scientific">Lithobates pipiens</name>
    <name type="common">Northern leopard frog</name>
    <name type="synonym">Rana pipiens</name>
    <dbReference type="NCBI Taxonomy" id="8404"/>
</organismHost>
<organismHost>
    <name type="scientific">Lithobates sylvaticus</name>
    <name type="common">Wood frog</name>
    <name type="synonym">Rana sylvatica</name>
    <dbReference type="NCBI Taxonomy" id="45438"/>
</organismHost>
<organismHost>
    <name type="scientific">Notophthalmus viridescens</name>
    <name type="common">Eastern newt</name>
    <name type="synonym">Triturus viridescens</name>
    <dbReference type="NCBI Taxonomy" id="8316"/>
</organismHost>
<feature type="chain" id="PRO_0000410530" description="Uncharacterized protein 012L">
    <location>
        <begin position="1"/>
        <end position="297"/>
    </location>
</feature>
<accession>Q6GZW3</accession>
<name>012L_FRG3G</name>
<dbReference type="EMBL" id="AY548484">
    <property type="protein sequence ID" value="AAT09671.1"/>
    <property type="molecule type" value="Genomic_DNA"/>
</dbReference>
<dbReference type="RefSeq" id="YP_031590.1">
    <property type="nucleotide sequence ID" value="NC_005946.1"/>
</dbReference>
<dbReference type="SMR" id="Q6GZW3"/>
<dbReference type="KEGG" id="vg:2947784"/>
<dbReference type="Proteomes" id="UP000008770">
    <property type="component" value="Segment"/>
</dbReference>
<dbReference type="InterPro" id="IPR043872">
    <property type="entry name" value="DUF5832"/>
</dbReference>
<dbReference type="Pfam" id="PF19150">
    <property type="entry name" value="DUF5832"/>
    <property type="match status" value="1"/>
</dbReference>